<gene>
    <name evidence="1" type="primary">glgC</name>
    <name type="ordered locus">BCQ_4684</name>
</gene>
<reference key="1">
    <citation type="journal article" date="2009" name="J. Bacteriol.">
        <title>Complete genome sequence of the extremophilic Bacillus cereus strain Q1 with industrial applications.</title>
        <authorList>
            <person name="Xiong Z."/>
            <person name="Jiang Y."/>
            <person name="Qi D."/>
            <person name="Lu H."/>
            <person name="Yang F."/>
            <person name="Yang J."/>
            <person name="Chen L."/>
            <person name="Sun L."/>
            <person name="Xu X."/>
            <person name="Xue Y."/>
            <person name="Zhu Y."/>
            <person name="Jin Q."/>
        </authorList>
    </citation>
    <scope>NUCLEOTIDE SEQUENCE [LARGE SCALE GENOMIC DNA]</scope>
    <source>
        <strain>Q1</strain>
    </source>
</reference>
<protein>
    <recommendedName>
        <fullName evidence="1">Glucose-1-phosphate adenylyltransferase</fullName>
        <ecNumber evidence="1">2.7.7.27</ecNumber>
    </recommendedName>
    <alternativeName>
        <fullName evidence="1">ADP-glucose pyrophosphorylase</fullName>
        <shortName evidence="1">ADPGlc PPase</shortName>
    </alternativeName>
    <alternativeName>
        <fullName evidence="1">ADP-glucose synthase</fullName>
    </alternativeName>
</protein>
<proteinExistence type="inferred from homology"/>
<sequence length="376" mass="42062">MAQKQKCVAMLLAGGKGSRLSALTKNLAKPAVPFGGKYRIIDFTLSNCANSGIETVGILTQYQPLELHNYIGIGNAWDLDRVSGGVTVLPPYAESSGVKWYTGTASAIYQNLNYLSQYEPEYVLILSGDHIYKMDYSKMLDYHIEKEADVSISVIEVPWDEASRFGIMNTNEEMEIVEFEEKPQFPRSNLASMGIYIFNWAILKEYLEMDARNPESSNDFGKDVLPLLLDEGKKLMAYPFEGYWKDVGTVKSLWEANMDLLRDETSLNLNDRDWRIYSVNPNEPPQYIAEKARVEESLINEGCVIEGDVKHSVLFQGVTVEEGSMVIDSVVMPGAKIGKNVVIERAIVGSEMVIEDGTIIRPEKNVDDVVLIAEGK</sequence>
<dbReference type="EC" id="2.7.7.27" evidence="1"/>
<dbReference type="EMBL" id="CP000227">
    <property type="protein sequence ID" value="ACM15110.1"/>
    <property type="molecule type" value="Genomic_DNA"/>
</dbReference>
<dbReference type="SMR" id="B9J2G7"/>
<dbReference type="KEGG" id="bcq:BCQ_4684"/>
<dbReference type="HOGENOM" id="CLU_029499_14_0_9"/>
<dbReference type="UniPathway" id="UPA00164"/>
<dbReference type="Proteomes" id="UP000000441">
    <property type="component" value="Chromosome"/>
</dbReference>
<dbReference type="GO" id="GO:0005524">
    <property type="term" value="F:ATP binding"/>
    <property type="evidence" value="ECO:0007669"/>
    <property type="project" value="UniProtKB-KW"/>
</dbReference>
<dbReference type="GO" id="GO:0008878">
    <property type="term" value="F:glucose-1-phosphate adenylyltransferase activity"/>
    <property type="evidence" value="ECO:0007669"/>
    <property type="project" value="UniProtKB-UniRule"/>
</dbReference>
<dbReference type="GO" id="GO:0005978">
    <property type="term" value="P:glycogen biosynthetic process"/>
    <property type="evidence" value="ECO:0007669"/>
    <property type="project" value="UniProtKB-UniRule"/>
</dbReference>
<dbReference type="CDD" id="cd02508">
    <property type="entry name" value="ADP_Glucose_PP"/>
    <property type="match status" value="1"/>
</dbReference>
<dbReference type="CDD" id="cd04651">
    <property type="entry name" value="LbH_G1P_AT_C"/>
    <property type="match status" value="1"/>
</dbReference>
<dbReference type="FunFam" id="2.160.10.10:FF:000022">
    <property type="entry name" value="Glucose-1-phosphate adenylyltransferase"/>
    <property type="match status" value="1"/>
</dbReference>
<dbReference type="FunFam" id="3.90.550.10:FF:000083">
    <property type="entry name" value="Glucose-1-phosphate adenylyltransferase"/>
    <property type="match status" value="1"/>
</dbReference>
<dbReference type="Gene3D" id="2.160.10.10">
    <property type="entry name" value="Hexapeptide repeat proteins"/>
    <property type="match status" value="1"/>
</dbReference>
<dbReference type="Gene3D" id="3.90.550.10">
    <property type="entry name" value="Spore Coat Polysaccharide Biosynthesis Protein SpsA, Chain A"/>
    <property type="match status" value="1"/>
</dbReference>
<dbReference type="HAMAP" id="MF_00624">
    <property type="entry name" value="GlgC"/>
    <property type="match status" value="1"/>
</dbReference>
<dbReference type="InterPro" id="IPR011831">
    <property type="entry name" value="ADP-Glc_PPase"/>
</dbReference>
<dbReference type="InterPro" id="IPR005836">
    <property type="entry name" value="ADP_Glu_pyroP_CS"/>
</dbReference>
<dbReference type="InterPro" id="IPR023049">
    <property type="entry name" value="GlgC_bac"/>
</dbReference>
<dbReference type="InterPro" id="IPR056818">
    <property type="entry name" value="GlmU/GlgC-like_hexapep"/>
</dbReference>
<dbReference type="InterPro" id="IPR005835">
    <property type="entry name" value="NTP_transferase_dom"/>
</dbReference>
<dbReference type="InterPro" id="IPR029044">
    <property type="entry name" value="Nucleotide-diphossugar_trans"/>
</dbReference>
<dbReference type="InterPro" id="IPR011004">
    <property type="entry name" value="Trimer_LpxA-like_sf"/>
</dbReference>
<dbReference type="NCBIfam" id="TIGR02091">
    <property type="entry name" value="glgC"/>
    <property type="match status" value="1"/>
</dbReference>
<dbReference type="NCBIfam" id="NF003670">
    <property type="entry name" value="PRK05293.1"/>
    <property type="match status" value="1"/>
</dbReference>
<dbReference type="PANTHER" id="PTHR43523:SF2">
    <property type="entry name" value="GLUCOSE-1-PHOSPHATE ADENYLYLTRANSFERASE"/>
    <property type="match status" value="1"/>
</dbReference>
<dbReference type="PANTHER" id="PTHR43523">
    <property type="entry name" value="GLUCOSE-1-PHOSPHATE ADENYLYLTRANSFERASE-RELATED"/>
    <property type="match status" value="1"/>
</dbReference>
<dbReference type="Pfam" id="PF24894">
    <property type="entry name" value="Hexapep_GlmU"/>
    <property type="match status" value="1"/>
</dbReference>
<dbReference type="Pfam" id="PF00483">
    <property type="entry name" value="NTP_transferase"/>
    <property type="match status" value="1"/>
</dbReference>
<dbReference type="SUPFAM" id="SSF53448">
    <property type="entry name" value="Nucleotide-diphospho-sugar transferases"/>
    <property type="match status" value="1"/>
</dbReference>
<dbReference type="SUPFAM" id="SSF51161">
    <property type="entry name" value="Trimeric LpxA-like enzymes"/>
    <property type="match status" value="1"/>
</dbReference>
<dbReference type="PROSITE" id="PS00808">
    <property type="entry name" value="ADP_GLC_PYROPHOSPH_1"/>
    <property type="match status" value="1"/>
</dbReference>
<dbReference type="PROSITE" id="PS00809">
    <property type="entry name" value="ADP_GLC_PYROPHOSPH_2"/>
    <property type="match status" value="1"/>
</dbReference>
<feature type="chain" id="PRO_1000147219" description="Glucose-1-phosphate adenylyltransferase">
    <location>
        <begin position="1"/>
        <end position="376"/>
    </location>
</feature>
<feature type="binding site" evidence="1">
    <location>
        <position position="101"/>
    </location>
    <ligand>
        <name>alpha-D-glucose 1-phosphate</name>
        <dbReference type="ChEBI" id="CHEBI:58601"/>
    </ligand>
</feature>
<feature type="binding site" evidence="1">
    <location>
        <position position="166"/>
    </location>
    <ligand>
        <name>alpha-D-glucose 1-phosphate</name>
        <dbReference type="ChEBI" id="CHEBI:58601"/>
    </ligand>
</feature>
<feature type="binding site" evidence="1">
    <location>
        <begin position="181"/>
        <end position="182"/>
    </location>
    <ligand>
        <name>alpha-D-glucose 1-phosphate</name>
        <dbReference type="ChEBI" id="CHEBI:58601"/>
    </ligand>
</feature>
<feature type="binding site" evidence="1">
    <location>
        <position position="192"/>
    </location>
    <ligand>
        <name>alpha-D-glucose 1-phosphate</name>
        <dbReference type="ChEBI" id="CHEBI:58601"/>
    </ligand>
</feature>
<keyword id="KW-0067">ATP-binding</keyword>
<keyword id="KW-0119">Carbohydrate metabolism</keyword>
<keyword id="KW-0320">Glycogen biosynthesis</keyword>
<keyword id="KW-0321">Glycogen metabolism</keyword>
<keyword id="KW-0547">Nucleotide-binding</keyword>
<keyword id="KW-0548">Nucleotidyltransferase</keyword>
<keyword id="KW-0808">Transferase</keyword>
<accession>B9J2G7</accession>
<comment type="function">
    <text evidence="1">Involved in the biosynthesis of ADP-glucose, a building block required for the elongation reactions to produce glycogen. Catalyzes the reaction between ATP and alpha-D-glucose 1-phosphate (G1P) to produce pyrophosphate and ADP-Glc.</text>
</comment>
<comment type="catalytic activity">
    <reaction evidence="1">
        <text>alpha-D-glucose 1-phosphate + ATP + H(+) = ADP-alpha-D-glucose + diphosphate</text>
        <dbReference type="Rhea" id="RHEA:12120"/>
        <dbReference type="ChEBI" id="CHEBI:15378"/>
        <dbReference type="ChEBI" id="CHEBI:30616"/>
        <dbReference type="ChEBI" id="CHEBI:33019"/>
        <dbReference type="ChEBI" id="CHEBI:57498"/>
        <dbReference type="ChEBI" id="CHEBI:58601"/>
        <dbReference type="EC" id="2.7.7.27"/>
    </reaction>
</comment>
<comment type="pathway">
    <text evidence="1">Glycan biosynthesis; glycogen biosynthesis.</text>
</comment>
<comment type="subunit">
    <text evidence="1">Homotetramer.</text>
</comment>
<comment type="similarity">
    <text evidence="1">Belongs to the bacterial/plant glucose-1-phosphate adenylyltransferase family.</text>
</comment>
<name>GLGC_BACCQ</name>
<evidence type="ECO:0000255" key="1">
    <source>
        <dbReference type="HAMAP-Rule" id="MF_00624"/>
    </source>
</evidence>
<organism>
    <name type="scientific">Bacillus cereus (strain Q1)</name>
    <dbReference type="NCBI Taxonomy" id="361100"/>
    <lineage>
        <taxon>Bacteria</taxon>
        <taxon>Bacillati</taxon>
        <taxon>Bacillota</taxon>
        <taxon>Bacilli</taxon>
        <taxon>Bacillales</taxon>
        <taxon>Bacillaceae</taxon>
        <taxon>Bacillus</taxon>
        <taxon>Bacillus cereus group</taxon>
    </lineage>
</organism>